<feature type="chain" id="PRO_0000410305" description="Clustered mitochondria protein homolog">
    <location>
        <begin position="1"/>
        <end position="1502"/>
    </location>
</feature>
<feature type="domain" description="Clu" evidence="2">
    <location>
        <begin position="399"/>
        <end position="693"/>
    </location>
</feature>
<feature type="region of interest" description="Disordered" evidence="3">
    <location>
        <begin position="1"/>
        <end position="62"/>
    </location>
</feature>
<feature type="region of interest" description="Disordered" evidence="3">
    <location>
        <begin position="571"/>
        <end position="615"/>
    </location>
</feature>
<feature type="region of interest" description="Disordered" evidence="3">
    <location>
        <begin position="755"/>
        <end position="799"/>
    </location>
</feature>
<feature type="region of interest" description="Disordered" evidence="3">
    <location>
        <begin position="1054"/>
        <end position="1085"/>
    </location>
</feature>
<feature type="region of interest" description="Disordered" evidence="3">
    <location>
        <begin position="1381"/>
        <end position="1403"/>
    </location>
</feature>
<feature type="region of interest" description="Disordered" evidence="3">
    <location>
        <begin position="1429"/>
        <end position="1502"/>
    </location>
</feature>
<feature type="compositionally biased region" description="Low complexity" evidence="3">
    <location>
        <begin position="7"/>
        <end position="35"/>
    </location>
</feature>
<feature type="compositionally biased region" description="Basic and acidic residues" evidence="3">
    <location>
        <begin position="53"/>
        <end position="62"/>
    </location>
</feature>
<feature type="compositionally biased region" description="Acidic residues" evidence="3">
    <location>
        <begin position="575"/>
        <end position="586"/>
    </location>
</feature>
<feature type="compositionally biased region" description="Basic and acidic residues" evidence="3">
    <location>
        <begin position="587"/>
        <end position="606"/>
    </location>
</feature>
<feature type="compositionally biased region" description="Low complexity" evidence="3">
    <location>
        <begin position="781"/>
        <end position="792"/>
    </location>
</feature>
<feature type="compositionally biased region" description="Basic and acidic residues" evidence="3">
    <location>
        <begin position="1054"/>
        <end position="1069"/>
    </location>
</feature>
<feature type="compositionally biased region" description="Low complexity" evidence="3">
    <location>
        <begin position="1429"/>
        <end position="1451"/>
    </location>
</feature>
<feature type="compositionally biased region" description="Basic and acidic residues" evidence="3">
    <location>
        <begin position="1462"/>
        <end position="1471"/>
    </location>
</feature>
<feature type="compositionally biased region" description="Basic residues" evidence="3">
    <location>
        <begin position="1486"/>
        <end position="1502"/>
    </location>
</feature>
<dbReference type="EMBL" id="AAEY01000064">
    <property type="protein sequence ID" value="EAL17429.1"/>
    <property type="molecule type" value="Genomic_DNA"/>
</dbReference>
<dbReference type="RefSeq" id="XP_772076.1">
    <property type="nucleotide sequence ID" value="XM_766983.1"/>
</dbReference>
<dbReference type="SMR" id="P0CR87"/>
<dbReference type="EnsemblFungi" id="AAW46737">
    <property type="protein sequence ID" value="AAW46737"/>
    <property type="gene ID" value="CNM02490"/>
</dbReference>
<dbReference type="GeneID" id="4939595"/>
<dbReference type="KEGG" id="cnb:CNBM2330"/>
<dbReference type="VEuPathDB" id="FungiDB:CNBM2330"/>
<dbReference type="HOGENOM" id="CLU_003256_2_0_1"/>
<dbReference type="OrthoDB" id="7102at5206"/>
<dbReference type="GO" id="GO:0005737">
    <property type="term" value="C:cytoplasm"/>
    <property type="evidence" value="ECO:0007669"/>
    <property type="project" value="UniProtKB-SubCell"/>
</dbReference>
<dbReference type="GO" id="GO:0003729">
    <property type="term" value="F:mRNA binding"/>
    <property type="evidence" value="ECO:0007669"/>
    <property type="project" value="TreeGrafter"/>
</dbReference>
<dbReference type="GO" id="GO:0048312">
    <property type="term" value="P:intracellular distribution of mitochondria"/>
    <property type="evidence" value="ECO:0007669"/>
    <property type="project" value="TreeGrafter"/>
</dbReference>
<dbReference type="GO" id="GO:0007005">
    <property type="term" value="P:mitochondrion organization"/>
    <property type="evidence" value="ECO:0007669"/>
    <property type="project" value="UniProtKB-UniRule"/>
</dbReference>
<dbReference type="CDD" id="cd15466">
    <property type="entry name" value="CLU-central"/>
    <property type="match status" value="1"/>
</dbReference>
<dbReference type="Gene3D" id="3.30.2280.10">
    <property type="entry name" value="Hypothetical protein (hspc210)"/>
    <property type="match status" value="1"/>
</dbReference>
<dbReference type="Gene3D" id="1.25.40.10">
    <property type="entry name" value="Tetratricopeptide repeat domain"/>
    <property type="match status" value="2"/>
</dbReference>
<dbReference type="HAMAP" id="MF_03013">
    <property type="entry name" value="CLU"/>
    <property type="match status" value="1"/>
</dbReference>
<dbReference type="InterPro" id="IPR033646">
    <property type="entry name" value="CLU-central"/>
</dbReference>
<dbReference type="InterPro" id="IPR025697">
    <property type="entry name" value="CLU_dom"/>
</dbReference>
<dbReference type="InterPro" id="IPR027523">
    <property type="entry name" value="CLU_prot"/>
</dbReference>
<dbReference type="InterPro" id="IPR023231">
    <property type="entry name" value="GSKIP_dom_sf"/>
</dbReference>
<dbReference type="InterPro" id="IPR011990">
    <property type="entry name" value="TPR-like_helical_dom_sf"/>
</dbReference>
<dbReference type="PANTHER" id="PTHR12601:SF6">
    <property type="entry name" value="CLUSTERED MITOCHONDRIA PROTEIN HOMOLOG"/>
    <property type="match status" value="1"/>
</dbReference>
<dbReference type="PANTHER" id="PTHR12601">
    <property type="entry name" value="EUKARYOTIC TRANSLATION INITIATION FACTOR 3 SUBUNIT EIF-3"/>
    <property type="match status" value="1"/>
</dbReference>
<dbReference type="Pfam" id="PF13236">
    <property type="entry name" value="CLU"/>
    <property type="match status" value="1"/>
</dbReference>
<dbReference type="Pfam" id="PF12807">
    <property type="entry name" value="eIF3_p135"/>
    <property type="match status" value="1"/>
</dbReference>
<dbReference type="Pfam" id="PF13424">
    <property type="entry name" value="TPR_12"/>
    <property type="match status" value="1"/>
</dbReference>
<dbReference type="SUPFAM" id="SSF103107">
    <property type="entry name" value="Hypothetical protein c14orf129, hspc210"/>
    <property type="match status" value="1"/>
</dbReference>
<dbReference type="SUPFAM" id="SSF48452">
    <property type="entry name" value="TPR-like"/>
    <property type="match status" value="2"/>
</dbReference>
<dbReference type="PROSITE" id="PS51823">
    <property type="entry name" value="CLU"/>
    <property type="match status" value="1"/>
</dbReference>
<accession>P0CR87</accession>
<accession>Q55HY4</accession>
<accession>Q5K7G8</accession>
<comment type="function">
    <text evidence="1">mRNA-binding protein involved in proper cytoplasmic distribution of mitochondria.</text>
</comment>
<comment type="subunit">
    <text evidence="1">May associate with the eukaryotic translation initiation factor 3 (eIF-3) complex.</text>
</comment>
<comment type="subcellular location">
    <subcellularLocation>
        <location evidence="1">Cytoplasm</location>
    </subcellularLocation>
</comment>
<comment type="similarity">
    <text evidence="1">Belongs to the CLU family.</text>
</comment>
<proteinExistence type="inferred from homology"/>
<reference key="1">
    <citation type="journal article" date="2005" name="Science">
        <title>The genome of the basidiomycetous yeast and human pathogen Cryptococcus neoformans.</title>
        <authorList>
            <person name="Loftus B.J."/>
            <person name="Fung E."/>
            <person name="Roncaglia P."/>
            <person name="Rowley D."/>
            <person name="Amedeo P."/>
            <person name="Bruno D."/>
            <person name="Vamathevan J."/>
            <person name="Miranda M."/>
            <person name="Anderson I.J."/>
            <person name="Fraser J.A."/>
            <person name="Allen J.E."/>
            <person name="Bosdet I.E."/>
            <person name="Brent M.R."/>
            <person name="Chiu R."/>
            <person name="Doering T.L."/>
            <person name="Donlin M.J."/>
            <person name="D'Souza C.A."/>
            <person name="Fox D.S."/>
            <person name="Grinberg V."/>
            <person name="Fu J."/>
            <person name="Fukushima M."/>
            <person name="Haas B.J."/>
            <person name="Huang J.C."/>
            <person name="Janbon G."/>
            <person name="Jones S.J.M."/>
            <person name="Koo H.L."/>
            <person name="Krzywinski M.I."/>
            <person name="Kwon-Chung K.J."/>
            <person name="Lengeler K.B."/>
            <person name="Maiti R."/>
            <person name="Marra M.A."/>
            <person name="Marra R.E."/>
            <person name="Mathewson C.A."/>
            <person name="Mitchell T.G."/>
            <person name="Pertea M."/>
            <person name="Riggs F.R."/>
            <person name="Salzberg S.L."/>
            <person name="Schein J.E."/>
            <person name="Shvartsbeyn A."/>
            <person name="Shin H."/>
            <person name="Shumway M."/>
            <person name="Specht C.A."/>
            <person name="Suh B.B."/>
            <person name="Tenney A."/>
            <person name="Utterback T.R."/>
            <person name="Wickes B.L."/>
            <person name="Wortman J.R."/>
            <person name="Wye N.H."/>
            <person name="Kronstad J.W."/>
            <person name="Lodge J.K."/>
            <person name="Heitman J."/>
            <person name="Davis R.W."/>
            <person name="Fraser C.M."/>
            <person name="Hyman R.W."/>
        </authorList>
    </citation>
    <scope>NUCLEOTIDE SEQUENCE [LARGE SCALE GENOMIC DNA]</scope>
    <source>
        <strain>B-3501A</strain>
    </source>
</reference>
<sequence>MSESAKAAAQNGQAEEQQLQQQLDEQQQLEEQQQLPPVTIRIPSPTCSRTVPKPKDSTEPLDRITLYPQPQETIQDIKLLINDWVGAYWLGPYSLQLPFVKGEDGRGKIYSKKKDFSEVRAGEKLNEWLEVQDAFEHLQEGEERVLEAVREPYGELSARQSIIRLLELIAPSGTTANTTSNPLGLQAGSTIFEQVRDGLVSANAETTYEEVEVSLPSGRKGKGGKKELVKVKRSVSGDKAHAFADWKGWAPASFGSLAVSSDPVEVAPSLKSIQISHFNPPPPHLRQKGHELYLQVSLLEGEVVTLICSTRGWYVSKSNVNNFDPSPRPSADGSIPAPTHSLIDLLHSISPLFSERVSRLPPISLDGALADPISTVAIPQATPAYPFLTSPPKPAISPEILRTQLAFLHTGAYGPDLVDAARDWNEEIQGIRELPRGTMQERVFREKMLQKVWAEFDQAAARAVQAVSKGDIPPINPAEDPKAHMYLQSNIFITQGDSDALDTYAHLGGDAAMRISHGKDAAGVKLLNKIDADGLYLLGHTIVDWQGRRWICQSILPGIFSNRRAVEEEKAQAETEAEAETADAVEGEQKKEDWVDVEKPTEKSGSETESDNPMMIYGLDSERPTSVHWDAATHSLLSTIATPLRLAAHTIKDGEGKEHEFYASAEVKGLKGQDGRRYLLDAQRLAPVDVEWLEKDITGPLVGPKKDDESAEEGVQYPHRLVMLRPELIEQFWESELKRWARGVAEKAQAKKAEAEAEAAAAADAEGEKKKEGEQSEIPQEEQSAAASAAAARRAEEDRPVDASLIGDIKQFNLSFNPDAFVEQPVLEAEGQEGKTEIKAAITDESDPSVKAVRDAGLFLRQIAIPAVVLDVLTGNTSGVMDGESLSKHLHQRGVNIRYLGHLASTIIQFSTSKDGAAKEPSGHLAALQSIVLQEMVFRAAKHILRELLYPLQPETATDAVSHFLNCLLGSCLNPAPVASYTPIGINSNEPEPAYVKLTPECLRAQIIKEVKSRFRWTLDESFLESGLRKKQLLRELASRVGFQLAQREYVFSKDQEEEENKREENIKSKEKKKGSKAGAKGETVKRTTTFEGEDVLTLVPVIKSTAPSVSVAEEILEAGRNTINRGKIEFGLDFMLEAIQLYESIHSVIHPEVASVYNSYAQAIHQIARLKIQQIAAQENPDPEQPLGVDISGALRFQRQAVAIAERTLGVYHHETAGYYFQLAMLENLEGNAQQSLRYFRHLLTLWDVIYGPGHPEISTILSNAGIVLQSMNDLSLSLSLQKQAYESTLACFGPNHIQTGQSLHQLVQGHFLAGDMASALETAKQALEIFKARLGEEHNQTKEEAKNVELLTAVIENQERQKEREEAVKKEATERLKMARERIGGGAASTSRPTGIRRLGGAGAGALPQGVRVVDPQTLAALAAAAGQGGNPSANAAAATAGQGEQANGESTGTPQIGERGTESLEELVRYIQGSAPGVGGSAKRGKNALRGKRRTGAKR</sequence>
<organism>
    <name type="scientific">Cryptococcus neoformans var. neoformans serotype D (strain B-3501A)</name>
    <name type="common">Filobasidiella neoformans</name>
    <dbReference type="NCBI Taxonomy" id="283643"/>
    <lineage>
        <taxon>Eukaryota</taxon>
        <taxon>Fungi</taxon>
        <taxon>Dikarya</taxon>
        <taxon>Basidiomycota</taxon>
        <taxon>Agaricomycotina</taxon>
        <taxon>Tremellomycetes</taxon>
        <taxon>Tremellales</taxon>
        <taxon>Cryptococcaceae</taxon>
        <taxon>Cryptococcus</taxon>
        <taxon>Cryptococcus neoformans species complex</taxon>
    </lineage>
</organism>
<keyword id="KW-0963">Cytoplasm</keyword>
<protein>
    <recommendedName>
        <fullName evidence="1">Clustered mitochondria protein homolog</fullName>
    </recommendedName>
    <alternativeName>
        <fullName evidence="1">Protein TIF31 homolog</fullName>
    </alternativeName>
</protein>
<name>CLU_CRYNB</name>
<evidence type="ECO:0000255" key="1">
    <source>
        <dbReference type="HAMAP-Rule" id="MF_03013"/>
    </source>
</evidence>
<evidence type="ECO:0000255" key="2">
    <source>
        <dbReference type="PROSITE-ProRule" id="PRU01167"/>
    </source>
</evidence>
<evidence type="ECO:0000256" key="3">
    <source>
        <dbReference type="SAM" id="MobiDB-lite"/>
    </source>
</evidence>
<gene>
    <name evidence="1" type="primary">CLU1</name>
    <name evidence="1" type="synonym">TIF31</name>
    <name type="ordered locus">CNBM2330</name>
</gene>